<protein>
    <recommendedName>
        <fullName>D-amino acid dehydrogenase 1</fullName>
        <ecNumber evidence="3">1.4.99.-</ecNumber>
    </recommendedName>
    <alternativeName>
        <fullName>D-alanine dehydrogenase 1</fullName>
    </alternativeName>
</protein>
<accession>Q9HTQ0</accession>
<sequence>MRVLVLGSGVIGTASAYYLARAGFEVVVVDRQDGPALETSFANAGQVSPGYASPWAAPGIPLKAMKWLLEKHAPLAIKLTSDPSQYAWMLQMLRNCTAERYAVNKERMVRLSEYSRDCLDELRAETGIAYEGRTLGTTQLFRTQAQLDAAGKDIAVLERSGVPYEVLDRDGIARVEPALAKVADKLVGALRLPNDQTGDCQLFTTRLAEMAKGLGVEFRFGQNIERLDFAGDRINGVLVNGELLTADHYVLALGSYSPQLLKPLGIKAPVYPLKGYSLTVPITNPEMAPTSTILDETYKVAITRFDQRIRVGGMAEIAGFDLSLNPRRRETLEMITTDLYPEGGDISQATFWTGLRPATPDGTPIVGATRYRNLFLNTGHGTLGWTMACGSGRYLADLMAKKRPQISTEGLDISRYSNSPENAKNAHPAPAH</sequence>
<gene>
    <name type="primary">dadA1</name>
    <name type="synonym">dadA</name>
    <name type="ordered locus">PA5304</name>
</gene>
<name>DADA1_PSEAE</name>
<dbReference type="EC" id="1.4.99.-" evidence="3"/>
<dbReference type="EMBL" id="AE004091">
    <property type="protein sequence ID" value="AAG08689.1"/>
    <property type="molecule type" value="Genomic_DNA"/>
</dbReference>
<dbReference type="PIR" id="H82982">
    <property type="entry name" value="H82982"/>
</dbReference>
<dbReference type="RefSeq" id="NP_253991.1">
    <property type="nucleotide sequence ID" value="NC_002516.2"/>
</dbReference>
<dbReference type="RefSeq" id="WP_003098274.1">
    <property type="nucleotide sequence ID" value="NZ_QZGE01000020.1"/>
</dbReference>
<dbReference type="SMR" id="Q9HTQ0"/>
<dbReference type="FunCoup" id="Q9HTQ0">
    <property type="interactions" value="583"/>
</dbReference>
<dbReference type="STRING" id="208964.PA5304"/>
<dbReference type="PaxDb" id="208964-PA5304"/>
<dbReference type="DNASU" id="878057"/>
<dbReference type="GeneID" id="878057"/>
<dbReference type="KEGG" id="pae:PA5304"/>
<dbReference type="PATRIC" id="fig|208964.12.peg.5558"/>
<dbReference type="PseudoCAP" id="PA5304"/>
<dbReference type="HOGENOM" id="CLU_007884_9_2_6"/>
<dbReference type="InParanoid" id="Q9HTQ0"/>
<dbReference type="OrthoDB" id="9805337at2"/>
<dbReference type="PhylomeDB" id="Q9HTQ0"/>
<dbReference type="BioCyc" id="PAER208964:G1FZ6-5425-MONOMER"/>
<dbReference type="BRENDA" id="1.4.99.6">
    <property type="organism ID" value="5087"/>
</dbReference>
<dbReference type="UniPathway" id="UPA00043">
    <property type="reaction ID" value="UER00498"/>
</dbReference>
<dbReference type="Proteomes" id="UP000002438">
    <property type="component" value="Chromosome"/>
</dbReference>
<dbReference type="GO" id="GO:0005737">
    <property type="term" value="C:cytoplasm"/>
    <property type="evidence" value="ECO:0000318"/>
    <property type="project" value="GO_Central"/>
</dbReference>
<dbReference type="GO" id="GO:0005886">
    <property type="term" value="C:plasma membrane"/>
    <property type="evidence" value="ECO:0000318"/>
    <property type="project" value="GO_Central"/>
</dbReference>
<dbReference type="GO" id="GO:0008718">
    <property type="term" value="F:D-amino-acid dehydrogenase activity"/>
    <property type="evidence" value="ECO:0000314"/>
    <property type="project" value="PseudoCAP"/>
</dbReference>
<dbReference type="GO" id="GO:0055130">
    <property type="term" value="P:D-alanine catabolic process"/>
    <property type="evidence" value="ECO:0000318"/>
    <property type="project" value="GO_Central"/>
</dbReference>
<dbReference type="FunFam" id="3.50.50.60:FF:000020">
    <property type="entry name" value="D-amino acid dehydrogenase"/>
    <property type="match status" value="1"/>
</dbReference>
<dbReference type="Gene3D" id="3.30.9.10">
    <property type="entry name" value="D-Amino Acid Oxidase, subunit A, domain 2"/>
    <property type="match status" value="1"/>
</dbReference>
<dbReference type="Gene3D" id="3.50.50.60">
    <property type="entry name" value="FAD/NAD(P)-binding domain"/>
    <property type="match status" value="2"/>
</dbReference>
<dbReference type="HAMAP" id="MF_01202">
    <property type="entry name" value="DadA"/>
    <property type="match status" value="1"/>
</dbReference>
<dbReference type="InterPro" id="IPR023080">
    <property type="entry name" value="DadA"/>
</dbReference>
<dbReference type="InterPro" id="IPR006076">
    <property type="entry name" value="FAD-dep_OxRdtase"/>
</dbReference>
<dbReference type="InterPro" id="IPR036188">
    <property type="entry name" value="FAD/NAD-bd_sf"/>
</dbReference>
<dbReference type="NCBIfam" id="NF001933">
    <property type="entry name" value="PRK00711.1"/>
    <property type="match status" value="1"/>
</dbReference>
<dbReference type="PANTHER" id="PTHR13847:SF280">
    <property type="entry name" value="D-AMINO ACID DEHYDROGENASE"/>
    <property type="match status" value="1"/>
</dbReference>
<dbReference type="PANTHER" id="PTHR13847">
    <property type="entry name" value="SARCOSINE DEHYDROGENASE-RELATED"/>
    <property type="match status" value="1"/>
</dbReference>
<dbReference type="Pfam" id="PF01266">
    <property type="entry name" value="DAO"/>
    <property type="match status" value="1"/>
</dbReference>
<dbReference type="SUPFAM" id="SSF54373">
    <property type="entry name" value="FAD-linked reductases, C-terminal domain"/>
    <property type="match status" value="1"/>
</dbReference>
<dbReference type="SUPFAM" id="SSF51905">
    <property type="entry name" value="FAD/NAD(P)-binding domain"/>
    <property type="match status" value="1"/>
</dbReference>
<evidence type="ECO:0000255" key="1"/>
<evidence type="ECO:0000256" key="2">
    <source>
        <dbReference type="SAM" id="MobiDB-lite"/>
    </source>
</evidence>
<evidence type="ECO:0000269" key="3">
    <source>
    </source>
</evidence>
<evidence type="ECO:0000305" key="4"/>
<evidence type="ECO:0000305" key="5">
    <source>
    </source>
</evidence>
<proteinExistence type="evidence at protein level"/>
<keyword id="KW-0274">FAD</keyword>
<keyword id="KW-0285">Flavoprotein</keyword>
<keyword id="KW-0560">Oxidoreductase</keyword>
<keyword id="KW-1185">Reference proteome</keyword>
<comment type="function">
    <text evidence="3">Catalyzes the oxidative deamination of D-amino acids. Has very broad substrate specificity; all the D-amino acids tested can be used as the substrate except D-Glu and D-Gln. Participates in the utilization of several D-amino acids as the sole source of nitrogen, i.e. D-alanine, D-histidine, D-phenylalanine, D-serine, D-threonine, and D-valine.</text>
</comment>
<comment type="catalytic activity">
    <reaction evidence="3">
        <text>a D-alpha-amino acid + A + H2O = a 2-oxocarboxylate + AH2 + NH4(+)</text>
        <dbReference type="Rhea" id="RHEA:18125"/>
        <dbReference type="ChEBI" id="CHEBI:13193"/>
        <dbReference type="ChEBI" id="CHEBI:15377"/>
        <dbReference type="ChEBI" id="CHEBI:17499"/>
        <dbReference type="ChEBI" id="CHEBI:28938"/>
        <dbReference type="ChEBI" id="CHEBI:35179"/>
        <dbReference type="ChEBI" id="CHEBI:59871"/>
    </reaction>
</comment>
<comment type="cofactor">
    <cofactor evidence="5">
        <name>FAD</name>
        <dbReference type="ChEBI" id="CHEBI:57692"/>
    </cofactor>
</comment>
<comment type="biophysicochemical properties">
    <kinetics>
        <KM evidence="3">0.46 mM for D-alanine</KM>
        <KM evidence="3">0.81 mM for D-histidine</KM>
        <KM evidence="3">1.07 mM for D-phenylalanine</KM>
        <KM evidence="3">1.78 mM for D-tyrosine</KM>
        <KM evidence="3">1.82 mM for D-proline</KM>
        <KM evidence="3">1.65 mM for D-serine</KM>
        <KM evidence="3">2.47 mM for D-threonine</KM>
        <KM evidence="3">3.01 mM for D-valine</KM>
        <KM evidence="3">5.37 mM for D-arginine</KM>
        <text>kcat is 0.74 sec(-1) with D-alanine as substrate. kcat is 0.84 sec(-1) with D-histidine as substrate. kcat is 1.10 sec(-1) with D-phenylalanine as substrate. kcat is 1.10 sec(-1) with D-tyrosine as substrate. kcat is 0.97 sec(-1) with D-proline as substrate. kcat is 0.80 sec(-1) with D-serine as substrate. kcat is 0.68 sec(-1) with D-threonine as substrate. kcat is 0.78 sec(-1) with D-valine as substrate. kcat is 1.27 sec(-1) with D-arginine as substrate.</text>
    </kinetics>
</comment>
<comment type="pathway">
    <text>Amino-acid degradation; D-alanine degradation; NH(3) and pyruvate from D-alanine: step 1/1.</text>
</comment>
<comment type="induction">
    <text evidence="3">Is highly up-regulated by L- and D-alanine. However, it is likely that intracellular L-Ala is the signal for induction of the dadAX genes through DadR binding to several putative operator sites.</text>
</comment>
<comment type="disruption phenotype">
    <text evidence="3">Cells lacking this gene lose the ability to utilize D-alanine, D-histidine, D-phenylalanine, D-serine, D-threonine, and D-valine as the sole source of nitrogen.</text>
</comment>
<comment type="similarity">
    <text evidence="4">Belongs to the DadA oxidoreductase family.</text>
</comment>
<comment type="caution">
    <text evidence="4">Was originally thought to be a heterodimer based on the purification of the enzyme first reported from E.coli B, but results of enzyme assays in PubMed:21378189 have indicated that DadA is solely responsible for the observed dehydrogenase activity.</text>
</comment>
<feature type="chain" id="PRO_0000166138" description="D-amino acid dehydrogenase 1">
    <location>
        <begin position="1"/>
        <end position="432"/>
    </location>
</feature>
<feature type="region of interest" description="Disordered" evidence="2">
    <location>
        <begin position="410"/>
        <end position="432"/>
    </location>
</feature>
<feature type="binding site" evidence="1">
    <location>
        <begin position="3"/>
        <end position="17"/>
    </location>
    <ligand>
        <name>FAD</name>
        <dbReference type="ChEBI" id="CHEBI:57692"/>
    </ligand>
</feature>
<reference key="1">
    <citation type="journal article" date="2000" name="Nature">
        <title>Complete genome sequence of Pseudomonas aeruginosa PAO1, an opportunistic pathogen.</title>
        <authorList>
            <person name="Stover C.K."/>
            <person name="Pham X.-Q.T."/>
            <person name="Erwin A.L."/>
            <person name="Mizoguchi S.D."/>
            <person name="Warrener P."/>
            <person name="Hickey M.J."/>
            <person name="Brinkman F.S.L."/>
            <person name="Hufnagle W.O."/>
            <person name="Kowalik D.J."/>
            <person name="Lagrou M."/>
            <person name="Garber R.L."/>
            <person name="Goltry L."/>
            <person name="Tolentino E."/>
            <person name="Westbrock-Wadman S."/>
            <person name="Yuan Y."/>
            <person name="Brody L.L."/>
            <person name="Coulter S.N."/>
            <person name="Folger K.R."/>
            <person name="Kas A."/>
            <person name="Larbig K."/>
            <person name="Lim R.M."/>
            <person name="Smith K.A."/>
            <person name="Spencer D.H."/>
            <person name="Wong G.K.-S."/>
            <person name="Wu Z."/>
            <person name="Paulsen I.T."/>
            <person name="Reizer J."/>
            <person name="Saier M.H. Jr."/>
            <person name="Hancock R.E.W."/>
            <person name="Lory S."/>
            <person name="Olson M.V."/>
        </authorList>
    </citation>
    <scope>NUCLEOTIDE SEQUENCE [LARGE SCALE GENOMIC DNA]</scope>
    <source>
        <strain>ATCC 15692 / DSM 22644 / CIP 104116 / JCM 14847 / LMG 12228 / 1C / PRS 101 / PAO1</strain>
    </source>
</reference>
<reference key="2">
    <citation type="journal article" date="2011" name="J. Bacteriol.">
        <title>Regulation and characterization of the dadRAX locus for D-amino acid catabolism in Pseudomonas aeruginosa PAO1.</title>
        <authorList>
            <person name="He W."/>
            <person name="Li C."/>
            <person name="Lu C.D."/>
        </authorList>
    </citation>
    <scope>FUNCTION</scope>
    <scope>CATALYTIC ACTIVITY</scope>
    <scope>SUBSTRATE SPECIFICITY</scope>
    <scope>KINETIC PARAMETERS</scope>
    <scope>COFACTOR</scope>
    <scope>DISRUPTION PHENOTYPE</scope>
    <scope>INDUCTION</scope>
    <source>
        <strain>ATCC 15692 / DSM 22644 / CIP 104116 / JCM 14847 / LMG 12228 / 1C / PRS 101 / PAO1</strain>
    </source>
</reference>
<organism>
    <name type="scientific">Pseudomonas aeruginosa (strain ATCC 15692 / DSM 22644 / CIP 104116 / JCM 14847 / LMG 12228 / 1C / PRS 101 / PAO1)</name>
    <dbReference type="NCBI Taxonomy" id="208964"/>
    <lineage>
        <taxon>Bacteria</taxon>
        <taxon>Pseudomonadati</taxon>
        <taxon>Pseudomonadota</taxon>
        <taxon>Gammaproteobacteria</taxon>
        <taxon>Pseudomonadales</taxon>
        <taxon>Pseudomonadaceae</taxon>
        <taxon>Pseudomonas</taxon>
    </lineage>
</organism>